<organism>
    <name type="scientific">Dinoroseobacter shibae (strain DSM 16493 / NCIMB 14021 / DFL 12)</name>
    <dbReference type="NCBI Taxonomy" id="398580"/>
    <lineage>
        <taxon>Bacteria</taxon>
        <taxon>Pseudomonadati</taxon>
        <taxon>Pseudomonadota</taxon>
        <taxon>Alphaproteobacteria</taxon>
        <taxon>Rhodobacterales</taxon>
        <taxon>Roseobacteraceae</taxon>
        <taxon>Dinoroseobacter</taxon>
    </lineage>
</organism>
<gene>
    <name evidence="1" type="primary">hisC</name>
    <name type="ordered locus">Dshi_2946</name>
</gene>
<keyword id="KW-0028">Amino-acid biosynthesis</keyword>
<keyword id="KW-0032">Aminotransferase</keyword>
<keyword id="KW-0368">Histidine biosynthesis</keyword>
<keyword id="KW-0663">Pyridoxal phosphate</keyword>
<keyword id="KW-1185">Reference proteome</keyword>
<keyword id="KW-0808">Transferase</keyword>
<name>HIS8_DINSH</name>
<dbReference type="EC" id="2.6.1.9" evidence="1"/>
<dbReference type="EMBL" id="CP000830">
    <property type="protein sequence ID" value="ABV94679.1"/>
    <property type="molecule type" value="Genomic_DNA"/>
</dbReference>
<dbReference type="RefSeq" id="WP_012179607.1">
    <property type="nucleotide sequence ID" value="NC_009952.1"/>
</dbReference>
<dbReference type="SMR" id="A8LK96"/>
<dbReference type="STRING" id="398580.Dshi_2946"/>
<dbReference type="KEGG" id="dsh:Dshi_2946"/>
<dbReference type="eggNOG" id="COG0079">
    <property type="taxonomic scope" value="Bacteria"/>
</dbReference>
<dbReference type="HOGENOM" id="CLU_017584_3_3_5"/>
<dbReference type="OrthoDB" id="9809616at2"/>
<dbReference type="UniPathway" id="UPA00031">
    <property type="reaction ID" value="UER00012"/>
</dbReference>
<dbReference type="Proteomes" id="UP000006833">
    <property type="component" value="Chromosome"/>
</dbReference>
<dbReference type="GO" id="GO:0004400">
    <property type="term" value="F:histidinol-phosphate transaminase activity"/>
    <property type="evidence" value="ECO:0007669"/>
    <property type="project" value="UniProtKB-UniRule"/>
</dbReference>
<dbReference type="GO" id="GO:0030170">
    <property type="term" value="F:pyridoxal phosphate binding"/>
    <property type="evidence" value="ECO:0007669"/>
    <property type="project" value="InterPro"/>
</dbReference>
<dbReference type="GO" id="GO:0000105">
    <property type="term" value="P:L-histidine biosynthetic process"/>
    <property type="evidence" value="ECO:0007669"/>
    <property type="project" value="UniProtKB-UniRule"/>
</dbReference>
<dbReference type="CDD" id="cd00609">
    <property type="entry name" value="AAT_like"/>
    <property type="match status" value="1"/>
</dbReference>
<dbReference type="Gene3D" id="3.90.1150.10">
    <property type="entry name" value="Aspartate Aminotransferase, domain 1"/>
    <property type="match status" value="1"/>
</dbReference>
<dbReference type="Gene3D" id="3.40.640.10">
    <property type="entry name" value="Type I PLP-dependent aspartate aminotransferase-like (Major domain)"/>
    <property type="match status" value="1"/>
</dbReference>
<dbReference type="HAMAP" id="MF_01023">
    <property type="entry name" value="HisC_aminotrans_2"/>
    <property type="match status" value="1"/>
</dbReference>
<dbReference type="InterPro" id="IPR004839">
    <property type="entry name" value="Aminotransferase_I/II_large"/>
</dbReference>
<dbReference type="InterPro" id="IPR005861">
    <property type="entry name" value="HisP_aminotrans"/>
</dbReference>
<dbReference type="InterPro" id="IPR050106">
    <property type="entry name" value="HistidinolP_aminotransfase"/>
</dbReference>
<dbReference type="InterPro" id="IPR015424">
    <property type="entry name" value="PyrdxlP-dep_Trfase"/>
</dbReference>
<dbReference type="InterPro" id="IPR015421">
    <property type="entry name" value="PyrdxlP-dep_Trfase_major"/>
</dbReference>
<dbReference type="InterPro" id="IPR015422">
    <property type="entry name" value="PyrdxlP-dep_Trfase_small"/>
</dbReference>
<dbReference type="NCBIfam" id="TIGR01141">
    <property type="entry name" value="hisC"/>
    <property type="match status" value="1"/>
</dbReference>
<dbReference type="PANTHER" id="PTHR43643:SF3">
    <property type="entry name" value="HISTIDINOL-PHOSPHATE AMINOTRANSFERASE"/>
    <property type="match status" value="1"/>
</dbReference>
<dbReference type="PANTHER" id="PTHR43643">
    <property type="entry name" value="HISTIDINOL-PHOSPHATE AMINOTRANSFERASE 2"/>
    <property type="match status" value="1"/>
</dbReference>
<dbReference type="Pfam" id="PF00155">
    <property type="entry name" value="Aminotran_1_2"/>
    <property type="match status" value="1"/>
</dbReference>
<dbReference type="SUPFAM" id="SSF53383">
    <property type="entry name" value="PLP-dependent transferases"/>
    <property type="match status" value="1"/>
</dbReference>
<accession>A8LK96</accession>
<reference key="1">
    <citation type="journal article" date="2010" name="ISME J.">
        <title>The complete genome sequence of the algal symbiont Dinoroseobacter shibae: a hitchhiker's guide to life in the sea.</title>
        <authorList>
            <person name="Wagner-Dobler I."/>
            <person name="Ballhausen B."/>
            <person name="Berger M."/>
            <person name="Brinkhoff T."/>
            <person name="Buchholz I."/>
            <person name="Bunk B."/>
            <person name="Cypionka H."/>
            <person name="Daniel R."/>
            <person name="Drepper T."/>
            <person name="Gerdts G."/>
            <person name="Hahnke S."/>
            <person name="Han C."/>
            <person name="Jahn D."/>
            <person name="Kalhoefer D."/>
            <person name="Kiss H."/>
            <person name="Klenk H.P."/>
            <person name="Kyrpides N."/>
            <person name="Liebl W."/>
            <person name="Liesegang H."/>
            <person name="Meincke L."/>
            <person name="Pati A."/>
            <person name="Petersen J."/>
            <person name="Piekarski T."/>
            <person name="Pommerenke C."/>
            <person name="Pradella S."/>
            <person name="Pukall R."/>
            <person name="Rabus R."/>
            <person name="Stackebrandt E."/>
            <person name="Thole S."/>
            <person name="Thompson L."/>
            <person name="Tielen P."/>
            <person name="Tomasch J."/>
            <person name="von Jan M."/>
            <person name="Wanphrut N."/>
            <person name="Wichels A."/>
            <person name="Zech H."/>
            <person name="Simon M."/>
        </authorList>
    </citation>
    <scope>NUCLEOTIDE SEQUENCE [LARGE SCALE GENOMIC DNA]</scope>
    <source>
        <strain>DSM 16493 / NCIMB 14021 / DFL 12</strain>
    </source>
</reference>
<evidence type="ECO:0000255" key="1">
    <source>
        <dbReference type="HAMAP-Rule" id="MF_01023"/>
    </source>
</evidence>
<protein>
    <recommendedName>
        <fullName evidence="1">Histidinol-phosphate aminotransferase</fullName>
        <ecNumber evidence="1">2.6.1.9</ecNumber>
    </recommendedName>
    <alternativeName>
        <fullName evidence="1">Imidazole acetol-phosphate transaminase</fullName>
    </alternativeName>
</protein>
<comment type="catalytic activity">
    <reaction evidence="1">
        <text>L-histidinol phosphate + 2-oxoglutarate = 3-(imidazol-4-yl)-2-oxopropyl phosphate + L-glutamate</text>
        <dbReference type="Rhea" id="RHEA:23744"/>
        <dbReference type="ChEBI" id="CHEBI:16810"/>
        <dbReference type="ChEBI" id="CHEBI:29985"/>
        <dbReference type="ChEBI" id="CHEBI:57766"/>
        <dbReference type="ChEBI" id="CHEBI:57980"/>
        <dbReference type="EC" id="2.6.1.9"/>
    </reaction>
</comment>
<comment type="cofactor">
    <cofactor evidence="1">
        <name>pyridoxal 5'-phosphate</name>
        <dbReference type="ChEBI" id="CHEBI:597326"/>
    </cofactor>
</comment>
<comment type="pathway">
    <text evidence="1">Amino-acid biosynthesis; L-histidine biosynthesis; L-histidine from 5-phospho-alpha-D-ribose 1-diphosphate: step 7/9.</text>
</comment>
<comment type="subunit">
    <text evidence="1">Homodimer.</text>
</comment>
<comment type="similarity">
    <text evidence="1">Belongs to the class-II pyridoxal-phosphate-dependent aminotransferase family. Histidinol-phosphate aminotransferase subfamily.</text>
</comment>
<feature type="chain" id="PRO_1000084191" description="Histidinol-phosphate aminotransferase">
    <location>
        <begin position="1"/>
        <end position="361"/>
    </location>
</feature>
<feature type="modified residue" description="N6-(pyridoxal phosphate)lysine" evidence="1">
    <location>
        <position position="218"/>
    </location>
</feature>
<sequence length="361" mass="38024">MTQITPQPGIMDIALYEGGASKVDGLDTVIKLSSNENPLGPSPAAIAAYKAAAGELHRYPSTDHAGLRGAIAEVYGLDPERIICGAGSDEIIAFLCQAYVGPGDEVIHTEHGFAMYRISTLAAGGTPVEVPERERVTDVDAILAGVTDRTRLVFIANPNNPTGTMIGGNALARLADGLPEGCLLVLDGAYAEYVPDYDAGKALVESRENVVMTRTFSKIYGLGALRVGWGYGPRHVIDVLNRVRGPFNLSTGALAAAEAAVRDRAYTETCRAENAKWRGWLASELAALGIPSDTSSANFVLARFASPEEAGACDDFLKARGIIVRRVSGYKLPAALRMTVGDAEGCRALVDAVAAFKAQAA</sequence>
<proteinExistence type="inferred from homology"/>